<keyword id="KW-0067">ATP-binding</keyword>
<keyword id="KW-0963">Cytoplasm</keyword>
<keyword id="KW-0227">DNA damage</keyword>
<keyword id="KW-0233">DNA recombination</keyword>
<keyword id="KW-0234">DNA repair</keyword>
<keyword id="KW-0238">DNA-binding</keyword>
<keyword id="KW-0378">Hydrolase</keyword>
<keyword id="KW-0547">Nucleotide-binding</keyword>
<protein>
    <recommendedName>
        <fullName evidence="1">Holliday junction branch migration complex subunit RuvB</fullName>
        <ecNumber evidence="1">3.6.4.-</ecNumber>
    </recommendedName>
</protein>
<accession>Q7W4T6</accession>
<gene>
    <name evidence="1" type="primary">ruvB</name>
    <name type="ordered locus">BPP3571</name>
</gene>
<sequence length="357" mass="39044">MAIQSDSLSSLPDSPRIVAPQPVSPNEESIERALRPKALEEYVGQQRAREQLEIFIAAARKRGEALDHVLLFGPPGLGKTTLAHIIAHEMGVQLRQTSGPVLERPGDLAALLTNLERNDVLFIDEIHRLSPVVEEILYPALEDFQIDILIGEGPAARSVKLDLQPFTLVGATTRAGMLTNPLRDRFGIVSRLEFYNTDELARIVTRSASLLNADITADGAHEVARRSRGTPRIANRLLRRVRDYAQVKAHGVIDQDAAGRALAMLDVDPQGLDVMDRKLLEAIVHKFDGGPVGVDSLAAAIGEERDTIEDVIEPYLIQHGYLQRTPRGRTATLTTWRHLGLNPPAAASGGTGELFSK</sequence>
<name>RUVB_BORPA</name>
<evidence type="ECO:0000255" key="1">
    <source>
        <dbReference type="HAMAP-Rule" id="MF_00016"/>
    </source>
</evidence>
<evidence type="ECO:0000256" key="2">
    <source>
        <dbReference type="SAM" id="MobiDB-lite"/>
    </source>
</evidence>
<comment type="function">
    <text evidence="1">The RuvA-RuvB-RuvC complex processes Holliday junction (HJ) DNA during genetic recombination and DNA repair, while the RuvA-RuvB complex plays an important role in the rescue of blocked DNA replication forks via replication fork reversal (RFR). RuvA specifically binds to HJ cruciform DNA, conferring on it an open structure. The RuvB hexamer acts as an ATP-dependent pump, pulling dsDNA into and through the RuvAB complex. RuvB forms 2 homohexamers on either side of HJ DNA bound by 1 or 2 RuvA tetramers; 4 subunits per hexamer contact DNA at a time. Coordinated motions by a converter formed by DNA-disengaged RuvB subunits stimulates ATP hydrolysis and nucleotide exchange. Immobilization of the converter enables RuvB to convert the ATP-contained energy into a lever motion, pulling 2 nucleotides of DNA out of the RuvA tetramer per ATP hydrolyzed, thus driving DNA branch migration. The RuvB motors rotate together with the DNA substrate, which together with the progressing nucleotide cycle form the mechanistic basis for DNA recombination by continuous HJ branch migration. Branch migration allows RuvC to scan DNA until it finds its consensus sequence, where it cleaves and resolves cruciform DNA.</text>
</comment>
<comment type="catalytic activity">
    <reaction evidence="1">
        <text>ATP + H2O = ADP + phosphate + H(+)</text>
        <dbReference type="Rhea" id="RHEA:13065"/>
        <dbReference type="ChEBI" id="CHEBI:15377"/>
        <dbReference type="ChEBI" id="CHEBI:15378"/>
        <dbReference type="ChEBI" id="CHEBI:30616"/>
        <dbReference type="ChEBI" id="CHEBI:43474"/>
        <dbReference type="ChEBI" id="CHEBI:456216"/>
    </reaction>
</comment>
<comment type="subunit">
    <text evidence="1">Homohexamer. Forms an RuvA(8)-RuvB(12)-Holliday junction (HJ) complex. HJ DNA is sandwiched between 2 RuvA tetramers; dsDNA enters through RuvA and exits via RuvB. An RuvB hexamer assembles on each DNA strand where it exits the tetramer. Each RuvB hexamer is contacted by two RuvA subunits (via domain III) on 2 adjacent RuvB subunits; this complex drives branch migration. In the full resolvosome a probable DNA-RuvA(4)-RuvB(12)-RuvC(2) complex forms which resolves the HJ.</text>
</comment>
<comment type="subcellular location">
    <subcellularLocation>
        <location evidence="1">Cytoplasm</location>
    </subcellularLocation>
</comment>
<comment type="domain">
    <text evidence="1">Has 3 domains, the large (RuvB-L) and small ATPase (RuvB-S) domains and the C-terminal head (RuvB-H) domain. The head domain binds DNA, while the ATPase domains jointly bind ATP, ADP or are empty depending on the state of the subunit in the translocation cycle. During a single DNA translocation step the structure of each domain remains the same, but their relative positions change.</text>
</comment>
<comment type="similarity">
    <text evidence="1">Belongs to the RuvB family.</text>
</comment>
<dbReference type="EC" id="3.6.4.-" evidence="1"/>
<dbReference type="EMBL" id="BX640434">
    <property type="protein sequence ID" value="CAE38855.1"/>
    <property type="molecule type" value="Genomic_DNA"/>
</dbReference>
<dbReference type="RefSeq" id="WP_003820965.1">
    <property type="nucleotide sequence ID" value="NC_002928.3"/>
</dbReference>
<dbReference type="SMR" id="Q7W4T6"/>
<dbReference type="GeneID" id="93205360"/>
<dbReference type="KEGG" id="bpa:BPP3571"/>
<dbReference type="HOGENOM" id="CLU_055599_1_0_4"/>
<dbReference type="Proteomes" id="UP000001421">
    <property type="component" value="Chromosome"/>
</dbReference>
<dbReference type="GO" id="GO:0005737">
    <property type="term" value="C:cytoplasm"/>
    <property type="evidence" value="ECO:0007669"/>
    <property type="project" value="UniProtKB-SubCell"/>
</dbReference>
<dbReference type="GO" id="GO:0048476">
    <property type="term" value="C:Holliday junction resolvase complex"/>
    <property type="evidence" value="ECO:0007669"/>
    <property type="project" value="UniProtKB-UniRule"/>
</dbReference>
<dbReference type="GO" id="GO:0005524">
    <property type="term" value="F:ATP binding"/>
    <property type="evidence" value="ECO:0007669"/>
    <property type="project" value="UniProtKB-UniRule"/>
</dbReference>
<dbReference type="GO" id="GO:0016887">
    <property type="term" value="F:ATP hydrolysis activity"/>
    <property type="evidence" value="ECO:0007669"/>
    <property type="project" value="InterPro"/>
</dbReference>
<dbReference type="GO" id="GO:0000400">
    <property type="term" value="F:four-way junction DNA binding"/>
    <property type="evidence" value="ECO:0007669"/>
    <property type="project" value="UniProtKB-UniRule"/>
</dbReference>
<dbReference type="GO" id="GO:0009378">
    <property type="term" value="F:four-way junction helicase activity"/>
    <property type="evidence" value="ECO:0007669"/>
    <property type="project" value="InterPro"/>
</dbReference>
<dbReference type="GO" id="GO:0006310">
    <property type="term" value="P:DNA recombination"/>
    <property type="evidence" value="ECO:0007669"/>
    <property type="project" value="UniProtKB-UniRule"/>
</dbReference>
<dbReference type="GO" id="GO:0006281">
    <property type="term" value="P:DNA repair"/>
    <property type="evidence" value="ECO:0007669"/>
    <property type="project" value="UniProtKB-UniRule"/>
</dbReference>
<dbReference type="CDD" id="cd00009">
    <property type="entry name" value="AAA"/>
    <property type="match status" value="1"/>
</dbReference>
<dbReference type="FunFam" id="1.10.10.10:FF:000086">
    <property type="entry name" value="Holliday junction ATP-dependent DNA helicase RuvB"/>
    <property type="match status" value="1"/>
</dbReference>
<dbReference type="FunFam" id="3.40.50.300:FF:000073">
    <property type="entry name" value="Holliday junction ATP-dependent DNA helicase RuvB"/>
    <property type="match status" value="1"/>
</dbReference>
<dbReference type="Gene3D" id="1.10.8.60">
    <property type="match status" value="1"/>
</dbReference>
<dbReference type="Gene3D" id="3.40.50.300">
    <property type="entry name" value="P-loop containing nucleotide triphosphate hydrolases"/>
    <property type="match status" value="1"/>
</dbReference>
<dbReference type="Gene3D" id="1.10.10.10">
    <property type="entry name" value="Winged helix-like DNA-binding domain superfamily/Winged helix DNA-binding domain"/>
    <property type="match status" value="1"/>
</dbReference>
<dbReference type="HAMAP" id="MF_00016">
    <property type="entry name" value="DNA_HJ_migration_RuvB"/>
    <property type="match status" value="1"/>
</dbReference>
<dbReference type="InterPro" id="IPR003593">
    <property type="entry name" value="AAA+_ATPase"/>
</dbReference>
<dbReference type="InterPro" id="IPR041445">
    <property type="entry name" value="AAA_lid_4"/>
</dbReference>
<dbReference type="InterPro" id="IPR004605">
    <property type="entry name" value="DNA_helicase_Holl-junc_RuvB"/>
</dbReference>
<dbReference type="InterPro" id="IPR027417">
    <property type="entry name" value="P-loop_NTPase"/>
</dbReference>
<dbReference type="InterPro" id="IPR008824">
    <property type="entry name" value="RuvB-like_N"/>
</dbReference>
<dbReference type="InterPro" id="IPR008823">
    <property type="entry name" value="RuvB_C"/>
</dbReference>
<dbReference type="InterPro" id="IPR036388">
    <property type="entry name" value="WH-like_DNA-bd_sf"/>
</dbReference>
<dbReference type="InterPro" id="IPR036390">
    <property type="entry name" value="WH_DNA-bd_sf"/>
</dbReference>
<dbReference type="NCBIfam" id="NF000868">
    <property type="entry name" value="PRK00080.1"/>
    <property type="match status" value="1"/>
</dbReference>
<dbReference type="NCBIfam" id="TIGR00635">
    <property type="entry name" value="ruvB"/>
    <property type="match status" value="1"/>
</dbReference>
<dbReference type="PANTHER" id="PTHR42848">
    <property type="match status" value="1"/>
</dbReference>
<dbReference type="PANTHER" id="PTHR42848:SF1">
    <property type="entry name" value="HOLLIDAY JUNCTION BRANCH MIGRATION COMPLEX SUBUNIT RUVB"/>
    <property type="match status" value="1"/>
</dbReference>
<dbReference type="Pfam" id="PF17864">
    <property type="entry name" value="AAA_lid_4"/>
    <property type="match status" value="1"/>
</dbReference>
<dbReference type="Pfam" id="PF05491">
    <property type="entry name" value="RuvB_C"/>
    <property type="match status" value="1"/>
</dbReference>
<dbReference type="Pfam" id="PF05496">
    <property type="entry name" value="RuvB_N"/>
    <property type="match status" value="1"/>
</dbReference>
<dbReference type="SMART" id="SM00382">
    <property type="entry name" value="AAA"/>
    <property type="match status" value="1"/>
</dbReference>
<dbReference type="SUPFAM" id="SSF52540">
    <property type="entry name" value="P-loop containing nucleoside triphosphate hydrolases"/>
    <property type="match status" value="1"/>
</dbReference>
<dbReference type="SUPFAM" id="SSF46785">
    <property type="entry name" value="Winged helix' DNA-binding domain"/>
    <property type="match status" value="1"/>
</dbReference>
<proteinExistence type="inferred from homology"/>
<organism>
    <name type="scientific">Bordetella parapertussis (strain 12822 / ATCC BAA-587 / NCTC 13253)</name>
    <dbReference type="NCBI Taxonomy" id="257311"/>
    <lineage>
        <taxon>Bacteria</taxon>
        <taxon>Pseudomonadati</taxon>
        <taxon>Pseudomonadota</taxon>
        <taxon>Betaproteobacteria</taxon>
        <taxon>Burkholderiales</taxon>
        <taxon>Alcaligenaceae</taxon>
        <taxon>Bordetella</taxon>
    </lineage>
</organism>
<reference key="1">
    <citation type="journal article" date="2003" name="Nat. Genet.">
        <title>Comparative analysis of the genome sequences of Bordetella pertussis, Bordetella parapertussis and Bordetella bronchiseptica.</title>
        <authorList>
            <person name="Parkhill J."/>
            <person name="Sebaihia M."/>
            <person name="Preston A."/>
            <person name="Murphy L.D."/>
            <person name="Thomson N.R."/>
            <person name="Harris D.E."/>
            <person name="Holden M.T.G."/>
            <person name="Churcher C.M."/>
            <person name="Bentley S.D."/>
            <person name="Mungall K.L."/>
            <person name="Cerdeno-Tarraga A.-M."/>
            <person name="Temple L."/>
            <person name="James K.D."/>
            <person name="Harris B."/>
            <person name="Quail M.A."/>
            <person name="Achtman M."/>
            <person name="Atkin R."/>
            <person name="Baker S."/>
            <person name="Basham D."/>
            <person name="Bason N."/>
            <person name="Cherevach I."/>
            <person name="Chillingworth T."/>
            <person name="Collins M."/>
            <person name="Cronin A."/>
            <person name="Davis P."/>
            <person name="Doggett J."/>
            <person name="Feltwell T."/>
            <person name="Goble A."/>
            <person name="Hamlin N."/>
            <person name="Hauser H."/>
            <person name="Holroyd S."/>
            <person name="Jagels K."/>
            <person name="Leather S."/>
            <person name="Moule S."/>
            <person name="Norberczak H."/>
            <person name="O'Neil S."/>
            <person name="Ormond D."/>
            <person name="Price C."/>
            <person name="Rabbinowitsch E."/>
            <person name="Rutter S."/>
            <person name="Sanders M."/>
            <person name="Saunders D."/>
            <person name="Seeger K."/>
            <person name="Sharp S."/>
            <person name="Simmonds M."/>
            <person name="Skelton J."/>
            <person name="Squares R."/>
            <person name="Squares S."/>
            <person name="Stevens K."/>
            <person name="Unwin L."/>
            <person name="Whitehead S."/>
            <person name="Barrell B.G."/>
            <person name="Maskell D.J."/>
        </authorList>
    </citation>
    <scope>NUCLEOTIDE SEQUENCE [LARGE SCALE GENOMIC DNA]</scope>
    <source>
        <strain>12822 / ATCC BAA-587 / NCTC 13253</strain>
    </source>
</reference>
<feature type="chain" id="PRO_0000165502" description="Holliday junction branch migration complex subunit RuvB">
    <location>
        <begin position="1"/>
        <end position="357"/>
    </location>
</feature>
<feature type="region of interest" description="Disordered" evidence="2">
    <location>
        <begin position="1"/>
        <end position="30"/>
    </location>
</feature>
<feature type="region of interest" description="Large ATPase domain (RuvB-L)" evidence="1">
    <location>
        <begin position="13"/>
        <end position="195"/>
    </location>
</feature>
<feature type="region of interest" description="Small ATPAse domain (RuvB-S)" evidence="1">
    <location>
        <begin position="196"/>
        <end position="266"/>
    </location>
</feature>
<feature type="region of interest" description="Head domain (RuvB-H)" evidence="1">
    <location>
        <begin position="269"/>
        <end position="357"/>
    </location>
</feature>
<feature type="compositionally biased region" description="Low complexity" evidence="2">
    <location>
        <begin position="1"/>
        <end position="15"/>
    </location>
</feature>
<feature type="binding site" evidence="1">
    <location>
        <position position="34"/>
    </location>
    <ligand>
        <name>ATP</name>
        <dbReference type="ChEBI" id="CHEBI:30616"/>
    </ligand>
</feature>
<feature type="binding site" evidence="1">
    <location>
        <position position="35"/>
    </location>
    <ligand>
        <name>ATP</name>
        <dbReference type="ChEBI" id="CHEBI:30616"/>
    </ligand>
</feature>
<feature type="binding site" evidence="1">
    <location>
        <position position="76"/>
    </location>
    <ligand>
        <name>ATP</name>
        <dbReference type="ChEBI" id="CHEBI:30616"/>
    </ligand>
</feature>
<feature type="binding site" evidence="1">
    <location>
        <position position="79"/>
    </location>
    <ligand>
        <name>ATP</name>
        <dbReference type="ChEBI" id="CHEBI:30616"/>
    </ligand>
</feature>
<feature type="binding site" evidence="1">
    <location>
        <position position="80"/>
    </location>
    <ligand>
        <name>ATP</name>
        <dbReference type="ChEBI" id="CHEBI:30616"/>
    </ligand>
</feature>
<feature type="binding site" evidence="1">
    <location>
        <position position="80"/>
    </location>
    <ligand>
        <name>Mg(2+)</name>
        <dbReference type="ChEBI" id="CHEBI:18420"/>
    </ligand>
</feature>
<feature type="binding site" evidence="1">
    <location>
        <position position="81"/>
    </location>
    <ligand>
        <name>ATP</name>
        <dbReference type="ChEBI" id="CHEBI:30616"/>
    </ligand>
</feature>
<feature type="binding site" evidence="1">
    <location>
        <begin position="142"/>
        <end position="144"/>
    </location>
    <ligand>
        <name>ATP</name>
        <dbReference type="ChEBI" id="CHEBI:30616"/>
    </ligand>
</feature>
<feature type="binding site" evidence="1">
    <location>
        <position position="185"/>
    </location>
    <ligand>
        <name>ATP</name>
        <dbReference type="ChEBI" id="CHEBI:30616"/>
    </ligand>
</feature>
<feature type="binding site" evidence="1">
    <location>
        <position position="195"/>
    </location>
    <ligand>
        <name>ATP</name>
        <dbReference type="ChEBI" id="CHEBI:30616"/>
    </ligand>
</feature>
<feature type="binding site" evidence="1">
    <location>
        <position position="232"/>
    </location>
    <ligand>
        <name>ATP</name>
        <dbReference type="ChEBI" id="CHEBI:30616"/>
    </ligand>
</feature>
<feature type="binding site" evidence="1">
    <location>
        <position position="305"/>
    </location>
    <ligand>
        <name>DNA</name>
        <dbReference type="ChEBI" id="CHEBI:16991"/>
    </ligand>
</feature>
<feature type="binding site" evidence="1">
    <location>
        <position position="324"/>
    </location>
    <ligand>
        <name>DNA</name>
        <dbReference type="ChEBI" id="CHEBI:16991"/>
    </ligand>
</feature>
<feature type="binding site" evidence="1">
    <location>
        <position position="329"/>
    </location>
    <ligand>
        <name>DNA</name>
        <dbReference type="ChEBI" id="CHEBI:16991"/>
    </ligand>
</feature>